<reference key="1">
    <citation type="journal article" date="2007" name="Proc. Natl. Acad. Sci. U.S.A.">
        <title>The Orientia tsutsugamushi genome reveals massive proliferation of conjugative type IV secretion system and host-cell interaction genes.</title>
        <authorList>
            <person name="Cho N.-H."/>
            <person name="Kim H.-R."/>
            <person name="Lee J.-H."/>
            <person name="Kim S.-Y."/>
            <person name="Kim J."/>
            <person name="Cha S."/>
            <person name="Kim S.-Y."/>
            <person name="Darby A.C."/>
            <person name="Fuxelius H.-H."/>
            <person name="Yin J."/>
            <person name="Kim J.H."/>
            <person name="Kim J."/>
            <person name="Lee S.J."/>
            <person name="Koh Y.-S."/>
            <person name="Jang W.-J."/>
            <person name="Park K.-H."/>
            <person name="Andersson S.G.E."/>
            <person name="Choi M.-S."/>
            <person name="Kim I.-S."/>
        </authorList>
    </citation>
    <scope>NUCLEOTIDE SEQUENCE [LARGE SCALE GENOMIC DNA]</scope>
    <source>
        <strain>Boryong</strain>
    </source>
</reference>
<evidence type="ECO:0000255" key="1">
    <source>
        <dbReference type="HAMAP-Rule" id="MF_00013"/>
    </source>
</evidence>
<evidence type="ECO:0000255" key="2">
    <source>
        <dbReference type="PROSITE-ProRule" id="PRU01067"/>
    </source>
</evidence>
<gene>
    <name evidence="1" type="primary">lipB</name>
    <name type="ordered locus">OTBS_1527</name>
</gene>
<comment type="function">
    <text evidence="1">Catalyzes the transfer of endogenously produced octanoic acid from octanoyl-acyl-carrier-protein onto the lipoyl domains of lipoate-dependent enzymes. Lipoyl-ACP can also act as a substrate although octanoyl-ACP is likely to be the physiological substrate.</text>
</comment>
<comment type="catalytic activity">
    <reaction evidence="1">
        <text>octanoyl-[ACP] + L-lysyl-[protein] = N(6)-octanoyl-L-lysyl-[protein] + holo-[ACP] + H(+)</text>
        <dbReference type="Rhea" id="RHEA:17665"/>
        <dbReference type="Rhea" id="RHEA-COMP:9636"/>
        <dbReference type="Rhea" id="RHEA-COMP:9685"/>
        <dbReference type="Rhea" id="RHEA-COMP:9752"/>
        <dbReference type="Rhea" id="RHEA-COMP:9928"/>
        <dbReference type="ChEBI" id="CHEBI:15378"/>
        <dbReference type="ChEBI" id="CHEBI:29969"/>
        <dbReference type="ChEBI" id="CHEBI:64479"/>
        <dbReference type="ChEBI" id="CHEBI:78463"/>
        <dbReference type="ChEBI" id="CHEBI:78809"/>
        <dbReference type="EC" id="2.3.1.181"/>
    </reaction>
</comment>
<comment type="pathway">
    <text evidence="1">Protein modification; protein lipoylation via endogenous pathway; protein N(6)-(lipoyl)lysine from octanoyl-[acyl-carrier-protein]: step 1/2.</text>
</comment>
<comment type="subcellular location">
    <subcellularLocation>
        <location evidence="1">Cytoplasm</location>
    </subcellularLocation>
</comment>
<comment type="miscellaneous">
    <text evidence="1">In the reaction, the free carboxyl group of octanoic acid is attached via an amide linkage to the epsilon-amino group of a specific lysine residue of lipoyl domains of lipoate-dependent enzymes.</text>
</comment>
<comment type="similarity">
    <text evidence="1">Belongs to the LipB family.</text>
</comment>
<keyword id="KW-0012">Acyltransferase</keyword>
<keyword id="KW-0963">Cytoplasm</keyword>
<keyword id="KW-1185">Reference proteome</keyword>
<keyword id="KW-0808">Transferase</keyword>
<sequence>MVEWIEIQYPIEYSEAYKMMKSRLTGILNGTASEAVFILEHQDVYTAGISAKNDELLNCYDIPVHHTDRGGKFTYHGPGQIIIYPVINLAANGRVKDIRNYVNNLASLVINSLKFFNIIGITVQDTIGVWIDSEFGRKKIASIGVRIHKWITYHGVAINVCPDLKKFKGIIPCGDRDTIVTSINELLDQKIDLDYYKAILKQEFYKIF</sequence>
<accession>A5CEL3</accession>
<proteinExistence type="inferred from homology"/>
<name>LIPB_ORITB</name>
<dbReference type="EC" id="2.3.1.181" evidence="1"/>
<dbReference type="EMBL" id="AM494475">
    <property type="protein sequence ID" value="CAM80614.1"/>
    <property type="molecule type" value="Genomic_DNA"/>
</dbReference>
<dbReference type="RefSeq" id="WP_011944926.1">
    <property type="nucleotide sequence ID" value="NC_009488.1"/>
</dbReference>
<dbReference type="SMR" id="A5CEL3"/>
<dbReference type="KEGG" id="ots:OTBS_1527"/>
<dbReference type="eggNOG" id="COG0321">
    <property type="taxonomic scope" value="Bacteria"/>
</dbReference>
<dbReference type="HOGENOM" id="CLU_035168_3_0_5"/>
<dbReference type="UniPathway" id="UPA00538">
    <property type="reaction ID" value="UER00592"/>
</dbReference>
<dbReference type="Proteomes" id="UP000001565">
    <property type="component" value="Chromosome"/>
</dbReference>
<dbReference type="GO" id="GO:0005737">
    <property type="term" value="C:cytoplasm"/>
    <property type="evidence" value="ECO:0007669"/>
    <property type="project" value="UniProtKB-SubCell"/>
</dbReference>
<dbReference type="GO" id="GO:0033819">
    <property type="term" value="F:lipoyl(octanoyl) transferase activity"/>
    <property type="evidence" value="ECO:0007669"/>
    <property type="project" value="UniProtKB-EC"/>
</dbReference>
<dbReference type="GO" id="GO:0036211">
    <property type="term" value="P:protein modification process"/>
    <property type="evidence" value="ECO:0007669"/>
    <property type="project" value="InterPro"/>
</dbReference>
<dbReference type="CDD" id="cd16444">
    <property type="entry name" value="LipB"/>
    <property type="match status" value="1"/>
</dbReference>
<dbReference type="Gene3D" id="3.30.930.10">
    <property type="entry name" value="Bira Bifunctional Protein, Domain 2"/>
    <property type="match status" value="1"/>
</dbReference>
<dbReference type="HAMAP" id="MF_00013">
    <property type="entry name" value="LipB"/>
    <property type="match status" value="1"/>
</dbReference>
<dbReference type="InterPro" id="IPR045864">
    <property type="entry name" value="aa-tRNA-synth_II/BPL/LPL"/>
</dbReference>
<dbReference type="InterPro" id="IPR004143">
    <property type="entry name" value="BPL_LPL_catalytic"/>
</dbReference>
<dbReference type="InterPro" id="IPR000544">
    <property type="entry name" value="Octanoyltransferase"/>
</dbReference>
<dbReference type="InterPro" id="IPR020605">
    <property type="entry name" value="Octanoyltransferase_CS"/>
</dbReference>
<dbReference type="NCBIfam" id="TIGR00214">
    <property type="entry name" value="lipB"/>
    <property type="match status" value="1"/>
</dbReference>
<dbReference type="NCBIfam" id="NF010921">
    <property type="entry name" value="PRK14341.1"/>
    <property type="match status" value="1"/>
</dbReference>
<dbReference type="NCBIfam" id="NF010925">
    <property type="entry name" value="PRK14345.1"/>
    <property type="match status" value="1"/>
</dbReference>
<dbReference type="PANTHER" id="PTHR10993:SF7">
    <property type="entry name" value="LIPOYLTRANSFERASE 2, MITOCHONDRIAL-RELATED"/>
    <property type="match status" value="1"/>
</dbReference>
<dbReference type="PANTHER" id="PTHR10993">
    <property type="entry name" value="OCTANOYLTRANSFERASE"/>
    <property type="match status" value="1"/>
</dbReference>
<dbReference type="Pfam" id="PF21948">
    <property type="entry name" value="LplA-B_cat"/>
    <property type="match status" value="1"/>
</dbReference>
<dbReference type="PIRSF" id="PIRSF016262">
    <property type="entry name" value="LPLase"/>
    <property type="match status" value="1"/>
</dbReference>
<dbReference type="SUPFAM" id="SSF55681">
    <property type="entry name" value="Class II aaRS and biotin synthetases"/>
    <property type="match status" value="1"/>
</dbReference>
<dbReference type="PROSITE" id="PS51733">
    <property type="entry name" value="BPL_LPL_CATALYTIC"/>
    <property type="match status" value="1"/>
</dbReference>
<dbReference type="PROSITE" id="PS01313">
    <property type="entry name" value="LIPB"/>
    <property type="match status" value="1"/>
</dbReference>
<feature type="chain" id="PRO_1000057105" description="Octanoyltransferase">
    <location>
        <begin position="1"/>
        <end position="208"/>
    </location>
</feature>
<feature type="domain" description="BPL/LPL catalytic" evidence="2">
    <location>
        <begin position="30"/>
        <end position="208"/>
    </location>
</feature>
<feature type="active site" description="Acyl-thioester intermediate" evidence="1">
    <location>
        <position position="173"/>
    </location>
</feature>
<feature type="binding site" evidence="1">
    <location>
        <begin position="69"/>
        <end position="76"/>
    </location>
    <ligand>
        <name>substrate</name>
    </ligand>
</feature>
<feature type="binding site" evidence="1">
    <location>
        <begin position="142"/>
        <end position="144"/>
    </location>
    <ligand>
        <name>substrate</name>
    </ligand>
</feature>
<feature type="binding site" evidence="1">
    <location>
        <begin position="155"/>
        <end position="157"/>
    </location>
    <ligand>
        <name>substrate</name>
    </ligand>
</feature>
<feature type="site" description="Lowers pKa of active site Cys" evidence="1">
    <location>
        <position position="139"/>
    </location>
</feature>
<organism>
    <name type="scientific">Orientia tsutsugamushi (strain Boryong)</name>
    <name type="common">Rickettsia tsutsugamushi</name>
    <dbReference type="NCBI Taxonomy" id="357244"/>
    <lineage>
        <taxon>Bacteria</taxon>
        <taxon>Pseudomonadati</taxon>
        <taxon>Pseudomonadota</taxon>
        <taxon>Alphaproteobacteria</taxon>
        <taxon>Rickettsiales</taxon>
        <taxon>Rickettsiaceae</taxon>
        <taxon>Rickettsieae</taxon>
        <taxon>Orientia</taxon>
    </lineage>
</organism>
<protein>
    <recommendedName>
        <fullName evidence="1">Octanoyltransferase</fullName>
        <ecNumber evidence="1">2.3.1.181</ecNumber>
    </recommendedName>
    <alternativeName>
        <fullName evidence="1">Lipoate-protein ligase B</fullName>
    </alternativeName>
    <alternativeName>
        <fullName evidence="1">Lipoyl/octanoyl transferase</fullName>
    </alternativeName>
    <alternativeName>
        <fullName evidence="1">Octanoyl-[acyl-carrier-protein]-protein N-octanoyltransferase</fullName>
    </alternativeName>
</protein>